<dbReference type="EMBL" id="D26361">
    <property type="protein sequence ID" value="BAA05392.2"/>
    <property type="status" value="ALT_INIT"/>
    <property type="molecule type" value="mRNA"/>
</dbReference>
<dbReference type="EMBL" id="AL445483">
    <property type="status" value="NOT_ANNOTATED_CDS"/>
    <property type="molecule type" value="Genomic_DNA"/>
</dbReference>
<dbReference type="EMBL" id="CH471067">
    <property type="protein sequence ID" value="EAW91316.1"/>
    <property type="molecule type" value="Genomic_DNA"/>
</dbReference>
<dbReference type="EMBL" id="BC098582">
    <property type="protein sequence ID" value="AAH98582.1"/>
    <property type="molecule type" value="mRNA"/>
</dbReference>
<dbReference type="EMBL" id="BC113742">
    <property type="protein sequence ID" value="AAI13743.1"/>
    <property type="molecule type" value="mRNA"/>
</dbReference>
<dbReference type="CCDS" id="CCDS30963.1"/>
<dbReference type="RefSeq" id="NP_001292721.1">
    <property type="nucleotide sequence ID" value="NM_001305792.1"/>
</dbReference>
<dbReference type="RefSeq" id="NP_055690.1">
    <property type="nucleotide sequence ID" value="NM_014875.3"/>
</dbReference>
<dbReference type="RefSeq" id="XP_011508533.1">
    <property type="nucleotide sequence ID" value="XM_011510231.3"/>
</dbReference>
<dbReference type="RefSeq" id="XP_011508534.1">
    <property type="nucleotide sequence ID" value="XM_011510232.3"/>
</dbReference>
<dbReference type="RefSeq" id="XP_016858494.1">
    <property type="nucleotide sequence ID" value="XM_017003005.1"/>
</dbReference>
<dbReference type="SMR" id="Q15058"/>
<dbReference type="BioGRID" id="115256">
    <property type="interactions" value="1841"/>
</dbReference>
<dbReference type="CORUM" id="Q15058"/>
<dbReference type="FunCoup" id="Q15058">
    <property type="interactions" value="1606"/>
</dbReference>
<dbReference type="IntAct" id="Q15058">
    <property type="interactions" value="112"/>
</dbReference>
<dbReference type="MINT" id="Q15058"/>
<dbReference type="STRING" id="9606.ENSP00000356319"/>
<dbReference type="BindingDB" id="Q15058"/>
<dbReference type="ChEMBL" id="CHEMBL5576"/>
<dbReference type="GlyCosmos" id="Q15058">
    <property type="glycosylation" value="2 sites, 1 glycan"/>
</dbReference>
<dbReference type="GlyGen" id="Q15058">
    <property type="glycosylation" value="4 sites, 1 O-linked glycan (4 sites)"/>
</dbReference>
<dbReference type="iPTMnet" id="Q15058"/>
<dbReference type="MetOSite" id="Q15058"/>
<dbReference type="PhosphoSitePlus" id="Q15058"/>
<dbReference type="SwissPalm" id="Q15058"/>
<dbReference type="BioMuta" id="KIF14"/>
<dbReference type="DMDM" id="23396633"/>
<dbReference type="jPOST" id="Q15058"/>
<dbReference type="MassIVE" id="Q15058"/>
<dbReference type="PaxDb" id="9606-ENSP00000356319"/>
<dbReference type="PeptideAtlas" id="Q15058"/>
<dbReference type="ProteomicsDB" id="60413"/>
<dbReference type="Pumba" id="Q15058"/>
<dbReference type="Antibodypedia" id="20633">
    <property type="antibodies" value="158 antibodies from 21 providers"/>
</dbReference>
<dbReference type="DNASU" id="9928"/>
<dbReference type="Ensembl" id="ENST00000367350.5">
    <property type="protein sequence ID" value="ENSP00000356319.4"/>
    <property type="gene ID" value="ENSG00000118193.12"/>
</dbReference>
<dbReference type="Ensembl" id="ENST00000614960.4">
    <property type="protein sequence ID" value="ENSP00000483069.1"/>
    <property type="gene ID" value="ENSG00000118193.12"/>
</dbReference>
<dbReference type="GeneID" id="9928"/>
<dbReference type="KEGG" id="hsa:9928"/>
<dbReference type="MANE-Select" id="ENST00000367350.5">
    <property type="protein sequence ID" value="ENSP00000356319.4"/>
    <property type="RefSeq nucleotide sequence ID" value="NM_014875.3"/>
    <property type="RefSeq protein sequence ID" value="NP_055690.1"/>
</dbReference>
<dbReference type="UCSC" id="uc010ppk.2">
    <property type="organism name" value="human"/>
</dbReference>
<dbReference type="AGR" id="HGNC:19181"/>
<dbReference type="CTD" id="9928"/>
<dbReference type="DisGeNET" id="9928"/>
<dbReference type="GeneCards" id="KIF14"/>
<dbReference type="HGNC" id="HGNC:19181">
    <property type="gene designation" value="KIF14"/>
</dbReference>
<dbReference type="HPA" id="ENSG00000118193">
    <property type="expression patterns" value="Tissue enhanced (bone marrow, lymphoid tissue)"/>
</dbReference>
<dbReference type="MalaCards" id="KIF14"/>
<dbReference type="MIM" id="611279">
    <property type="type" value="gene"/>
</dbReference>
<dbReference type="MIM" id="616258">
    <property type="type" value="phenotype"/>
</dbReference>
<dbReference type="MIM" id="617914">
    <property type="type" value="phenotype"/>
</dbReference>
<dbReference type="neXtProt" id="NX_Q15058"/>
<dbReference type="OpenTargets" id="ENSG00000118193"/>
<dbReference type="Orphanet" id="2512">
    <property type="disease" value="Autosomal recessive primary microcephaly"/>
</dbReference>
<dbReference type="Orphanet" id="439897">
    <property type="disease" value="Lethal fetal cerebrorenogenitourinary agenesis/hypoplasia syndrome"/>
</dbReference>
<dbReference type="PharmGKB" id="PA38820"/>
<dbReference type="VEuPathDB" id="HostDB:ENSG00000118193"/>
<dbReference type="eggNOG" id="KOG0245">
    <property type="taxonomic scope" value="Eukaryota"/>
</dbReference>
<dbReference type="GeneTree" id="ENSGT00940000156834"/>
<dbReference type="HOGENOM" id="CLU_003253_0_0_1"/>
<dbReference type="InParanoid" id="Q15058"/>
<dbReference type="OMA" id="VVLIKHW"/>
<dbReference type="OrthoDB" id="3176171at2759"/>
<dbReference type="PAN-GO" id="Q15058">
    <property type="GO annotations" value="6 GO annotations based on evolutionary models"/>
</dbReference>
<dbReference type="PhylomeDB" id="Q15058"/>
<dbReference type="TreeFam" id="TF105221"/>
<dbReference type="PathwayCommons" id="Q15058"/>
<dbReference type="Reactome" id="R-HSA-5625900">
    <property type="pathway name" value="RHO GTPases activate CIT"/>
</dbReference>
<dbReference type="Reactome" id="R-HSA-9696270">
    <property type="pathway name" value="RND2 GTPase cycle"/>
</dbReference>
<dbReference type="Reactome" id="R-HSA-9696273">
    <property type="pathway name" value="RND1 GTPase cycle"/>
</dbReference>
<dbReference type="SignaLink" id="Q15058"/>
<dbReference type="SIGNOR" id="Q15058"/>
<dbReference type="BioGRID-ORCS" id="9928">
    <property type="hits" value="425 hits in 1165 CRISPR screens"/>
</dbReference>
<dbReference type="CD-CODE" id="8C2F96ED">
    <property type="entry name" value="Centrosome"/>
</dbReference>
<dbReference type="ChiTaRS" id="KIF14">
    <property type="organism name" value="human"/>
</dbReference>
<dbReference type="GeneWiki" id="KIF14"/>
<dbReference type="GenomeRNAi" id="9928"/>
<dbReference type="Pharos" id="Q15058">
    <property type="development level" value="Tbio"/>
</dbReference>
<dbReference type="PRO" id="PR:Q15058"/>
<dbReference type="Proteomes" id="UP000005640">
    <property type="component" value="Chromosome 1"/>
</dbReference>
<dbReference type="RNAct" id="Q15058">
    <property type="molecule type" value="protein"/>
</dbReference>
<dbReference type="Bgee" id="ENSG00000118193">
    <property type="expression patterns" value="Expressed in secondary oocyte and 107 other cell types or tissues"/>
</dbReference>
<dbReference type="GO" id="GO:0005737">
    <property type="term" value="C:cytoplasm"/>
    <property type="evidence" value="ECO:0000318"/>
    <property type="project" value="GO_Central"/>
</dbReference>
<dbReference type="GO" id="GO:0005829">
    <property type="term" value="C:cytosol"/>
    <property type="evidence" value="ECO:0000314"/>
    <property type="project" value="HPA"/>
</dbReference>
<dbReference type="GO" id="GO:0090543">
    <property type="term" value="C:Flemming body"/>
    <property type="evidence" value="ECO:0000314"/>
    <property type="project" value="HPA"/>
</dbReference>
<dbReference type="GO" id="GO:0005871">
    <property type="term" value="C:kinesin complex"/>
    <property type="evidence" value="ECO:0000318"/>
    <property type="project" value="GO_Central"/>
</dbReference>
<dbReference type="GO" id="GO:0016020">
    <property type="term" value="C:membrane"/>
    <property type="evidence" value="ECO:0007005"/>
    <property type="project" value="UniProtKB"/>
</dbReference>
<dbReference type="GO" id="GO:0005874">
    <property type="term" value="C:microtubule"/>
    <property type="evidence" value="ECO:0000314"/>
    <property type="project" value="MGI"/>
</dbReference>
<dbReference type="GO" id="GO:0030496">
    <property type="term" value="C:midbody"/>
    <property type="evidence" value="ECO:0000314"/>
    <property type="project" value="UniProtKB"/>
</dbReference>
<dbReference type="GO" id="GO:0005634">
    <property type="term" value="C:nucleus"/>
    <property type="evidence" value="ECO:0007669"/>
    <property type="project" value="UniProtKB-SubCell"/>
</dbReference>
<dbReference type="GO" id="GO:0051233">
    <property type="term" value="C:spindle midzone"/>
    <property type="evidence" value="ECO:0000314"/>
    <property type="project" value="UniProtKB"/>
</dbReference>
<dbReference type="GO" id="GO:0005524">
    <property type="term" value="F:ATP binding"/>
    <property type="evidence" value="ECO:0000250"/>
    <property type="project" value="UniProtKB"/>
</dbReference>
<dbReference type="GO" id="GO:0016887">
    <property type="term" value="F:ATP hydrolysis activity"/>
    <property type="evidence" value="ECO:0000250"/>
    <property type="project" value="UniProtKB"/>
</dbReference>
<dbReference type="GO" id="GO:0008017">
    <property type="term" value="F:microtubule binding"/>
    <property type="evidence" value="ECO:0000250"/>
    <property type="project" value="UniProtKB"/>
</dbReference>
<dbReference type="GO" id="GO:0003777">
    <property type="term" value="F:microtubule motor activity"/>
    <property type="evidence" value="ECO:0000318"/>
    <property type="project" value="GO_Central"/>
</dbReference>
<dbReference type="GO" id="GO:0030165">
    <property type="term" value="F:PDZ domain binding"/>
    <property type="evidence" value="ECO:0000314"/>
    <property type="project" value="MGI"/>
</dbReference>
<dbReference type="GO" id="GO:0008574">
    <property type="term" value="F:plus-end-directed microtubule motor activity"/>
    <property type="evidence" value="ECO:0000250"/>
    <property type="project" value="UniProtKB"/>
</dbReference>
<dbReference type="GO" id="GO:0019901">
    <property type="term" value="F:protein kinase binding"/>
    <property type="evidence" value="ECO:0000353"/>
    <property type="project" value="UniProtKB"/>
</dbReference>
<dbReference type="GO" id="GO:0015631">
    <property type="term" value="F:tubulin binding"/>
    <property type="evidence" value="ECO:0000250"/>
    <property type="project" value="UniProtKB"/>
</dbReference>
<dbReference type="GO" id="GO:0032147">
    <property type="term" value="P:activation of protein kinase activity"/>
    <property type="evidence" value="ECO:0000315"/>
    <property type="project" value="UniProtKB"/>
</dbReference>
<dbReference type="GO" id="GO:0051301">
    <property type="term" value="P:cell division"/>
    <property type="evidence" value="ECO:0007669"/>
    <property type="project" value="Ensembl"/>
</dbReference>
<dbReference type="GO" id="GO:0021846">
    <property type="term" value="P:cell proliferation in forebrain"/>
    <property type="evidence" value="ECO:0000250"/>
    <property type="project" value="UniProtKB"/>
</dbReference>
<dbReference type="GO" id="GO:0021695">
    <property type="term" value="P:cerebellar cortex development"/>
    <property type="evidence" value="ECO:0000250"/>
    <property type="project" value="UniProtKB"/>
</dbReference>
<dbReference type="GO" id="GO:0021685">
    <property type="term" value="P:cerebellar granular layer structural organization"/>
    <property type="evidence" value="ECO:0000250"/>
    <property type="project" value="UniProtKB"/>
</dbReference>
<dbReference type="GO" id="GO:0021693">
    <property type="term" value="P:cerebellar Purkinje cell layer structural organization"/>
    <property type="evidence" value="ECO:0000250"/>
    <property type="project" value="UniProtKB"/>
</dbReference>
<dbReference type="GO" id="GO:0021987">
    <property type="term" value="P:cerebral cortex development"/>
    <property type="evidence" value="ECO:0000250"/>
    <property type="project" value="UniProtKB"/>
</dbReference>
<dbReference type="GO" id="GO:0045184">
    <property type="term" value="P:establishment of protein localization"/>
    <property type="evidence" value="ECO:0000314"/>
    <property type="project" value="MGI"/>
</dbReference>
<dbReference type="GO" id="GO:0021766">
    <property type="term" value="P:hippocampus development"/>
    <property type="evidence" value="ECO:0000250"/>
    <property type="project" value="UniProtKB"/>
</dbReference>
<dbReference type="GO" id="GO:0007018">
    <property type="term" value="P:microtubule-based movement"/>
    <property type="evidence" value="ECO:0000318"/>
    <property type="project" value="GO_Central"/>
</dbReference>
<dbReference type="GO" id="GO:0007080">
    <property type="term" value="P:mitotic metaphase chromosome alignment"/>
    <property type="evidence" value="ECO:0000315"/>
    <property type="project" value="UniProtKB"/>
</dbReference>
<dbReference type="GO" id="GO:0043066">
    <property type="term" value="P:negative regulation of apoptotic process"/>
    <property type="evidence" value="ECO:0000315"/>
    <property type="project" value="UniProtKB"/>
</dbReference>
<dbReference type="GO" id="GO:0033624">
    <property type="term" value="P:negative regulation of integrin activation"/>
    <property type="evidence" value="ECO:0000315"/>
    <property type="project" value="MGI"/>
</dbReference>
<dbReference type="GO" id="GO:0043524">
    <property type="term" value="P:negative regulation of neuron apoptotic process"/>
    <property type="evidence" value="ECO:0000250"/>
    <property type="project" value="UniProtKB"/>
</dbReference>
<dbReference type="GO" id="GO:0021772">
    <property type="term" value="P:olfactory bulb development"/>
    <property type="evidence" value="ECO:0000250"/>
    <property type="project" value="UniProtKB"/>
</dbReference>
<dbReference type="GO" id="GO:0008284">
    <property type="term" value="P:positive regulation of cell population proliferation"/>
    <property type="evidence" value="ECO:0000314"/>
    <property type="project" value="UniProtKB"/>
</dbReference>
<dbReference type="GO" id="GO:0032467">
    <property type="term" value="P:positive regulation of cytokinesis"/>
    <property type="evidence" value="ECO:0000315"/>
    <property type="project" value="UniProtKB"/>
</dbReference>
<dbReference type="GO" id="GO:0043161">
    <property type="term" value="P:proteasome-mediated ubiquitin-dependent protein catabolic process"/>
    <property type="evidence" value="ECO:0000315"/>
    <property type="project" value="UniProtKB"/>
</dbReference>
<dbReference type="GO" id="GO:0030155">
    <property type="term" value="P:regulation of cell adhesion"/>
    <property type="evidence" value="ECO:0000315"/>
    <property type="project" value="MGI"/>
</dbReference>
<dbReference type="GO" id="GO:0001558">
    <property type="term" value="P:regulation of cell growth"/>
    <property type="evidence" value="ECO:0000315"/>
    <property type="project" value="UniProtKB"/>
</dbReference>
<dbReference type="GO" id="GO:1903429">
    <property type="term" value="P:regulation of cell maturation"/>
    <property type="evidence" value="ECO:0007669"/>
    <property type="project" value="Ensembl"/>
</dbReference>
<dbReference type="GO" id="GO:0030334">
    <property type="term" value="P:regulation of cell migration"/>
    <property type="evidence" value="ECO:0000315"/>
    <property type="project" value="MGI"/>
</dbReference>
<dbReference type="GO" id="GO:2000045">
    <property type="term" value="P:regulation of G1/S transition of mitotic cell cycle"/>
    <property type="evidence" value="ECO:0000315"/>
    <property type="project" value="UniProtKB"/>
</dbReference>
<dbReference type="GO" id="GO:0010389">
    <property type="term" value="P:regulation of G2/M transition of mitotic cell cycle"/>
    <property type="evidence" value="ECO:0000315"/>
    <property type="project" value="UniProtKB"/>
</dbReference>
<dbReference type="GO" id="GO:0031641">
    <property type="term" value="P:regulation of myelination"/>
    <property type="evidence" value="ECO:0000250"/>
    <property type="project" value="UniProtKB"/>
</dbReference>
<dbReference type="GO" id="GO:0043523">
    <property type="term" value="P:regulation of neuron apoptotic process"/>
    <property type="evidence" value="ECO:0000250"/>
    <property type="project" value="UniProtKB"/>
</dbReference>
<dbReference type="GO" id="GO:0032487">
    <property type="term" value="P:regulation of Rap protein signal transduction"/>
    <property type="evidence" value="ECO:0000315"/>
    <property type="project" value="MGI"/>
</dbReference>
<dbReference type="GO" id="GO:0031146">
    <property type="term" value="P:SCF-dependent proteasomal ubiquitin-dependent protein catabolic process"/>
    <property type="evidence" value="ECO:0000315"/>
    <property type="project" value="UniProtKB"/>
</dbReference>
<dbReference type="GO" id="GO:0034446">
    <property type="term" value="P:substrate adhesion-dependent cell spreading"/>
    <property type="evidence" value="ECO:0000314"/>
    <property type="project" value="MGI"/>
</dbReference>
<dbReference type="CDD" id="cd22707">
    <property type="entry name" value="FHA_KIF14"/>
    <property type="match status" value="1"/>
</dbReference>
<dbReference type="CDD" id="cd01365">
    <property type="entry name" value="KISc_KIF1A_KIF1B"/>
    <property type="match status" value="1"/>
</dbReference>
<dbReference type="FunFam" id="2.60.200.20:FF:000020">
    <property type="entry name" value="Kinesin family member 14"/>
    <property type="match status" value="1"/>
</dbReference>
<dbReference type="FunFam" id="3.40.850.10:FF:000042">
    <property type="entry name" value="Kinesin family member 14"/>
    <property type="match status" value="1"/>
</dbReference>
<dbReference type="Gene3D" id="2.60.200.20">
    <property type="match status" value="1"/>
</dbReference>
<dbReference type="Gene3D" id="3.40.850.10">
    <property type="entry name" value="Kinesin motor domain"/>
    <property type="match status" value="1"/>
</dbReference>
<dbReference type="InterPro" id="IPR056523">
    <property type="entry name" value="4HB_KIF14"/>
</dbReference>
<dbReference type="InterPro" id="IPR000253">
    <property type="entry name" value="FHA_dom"/>
</dbReference>
<dbReference type="InterPro" id="IPR032405">
    <property type="entry name" value="Kinesin_assoc"/>
</dbReference>
<dbReference type="InterPro" id="IPR019821">
    <property type="entry name" value="Kinesin_motor_CS"/>
</dbReference>
<dbReference type="InterPro" id="IPR001752">
    <property type="entry name" value="Kinesin_motor_dom"/>
</dbReference>
<dbReference type="InterPro" id="IPR036961">
    <property type="entry name" value="Kinesin_motor_dom_sf"/>
</dbReference>
<dbReference type="InterPro" id="IPR027417">
    <property type="entry name" value="P-loop_NTPase"/>
</dbReference>
<dbReference type="InterPro" id="IPR008984">
    <property type="entry name" value="SMAD_FHA_dom_sf"/>
</dbReference>
<dbReference type="PANTHER" id="PTHR47117:SF7">
    <property type="entry name" value="KINESIN-LIKE PROTEIN KIF14"/>
    <property type="match status" value="1"/>
</dbReference>
<dbReference type="PANTHER" id="PTHR47117">
    <property type="entry name" value="STAR-RELATED LIPID TRANSFER PROTEIN 9"/>
    <property type="match status" value="1"/>
</dbReference>
<dbReference type="Pfam" id="PF23313">
    <property type="entry name" value="4HB_KIF14"/>
    <property type="match status" value="1"/>
</dbReference>
<dbReference type="Pfam" id="PF00498">
    <property type="entry name" value="FHA"/>
    <property type="match status" value="1"/>
</dbReference>
<dbReference type="Pfam" id="PF00225">
    <property type="entry name" value="Kinesin"/>
    <property type="match status" value="1"/>
</dbReference>
<dbReference type="Pfam" id="PF16183">
    <property type="entry name" value="Kinesin_assoc"/>
    <property type="match status" value="1"/>
</dbReference>
<dbReference type="PRINTS" id="PR00380">
    <property type="entry name" value="KINESINHEAVY"/>
</dbReference>
<dbReference type="SMART" id="SM00240">
    <property type="entry name" value="FHA"/>
    <property type="match status" value="1"/>
</dbReference>
<dbReference type="SMART" id="SM00129">
    <property type="entry name" value="KISc"/>
    <property type="match status" value="1"/>
</dbReference>
<dbReference type="SUPFAM" id="SSF52540">
    <property type="entry name" value="P-loop containing nucleoside triphosphate hydrolases"/>
    <property type="match status" value="1"/>
</dbReference>
<dbReference type="SUPFAM" id="SSF49879">
    <property type="entry name" value="SMAD/FHA domain"/>
    <property type="match status" value="1"/>
</dbReference>
<dbReference type="PROSITE" id="PS00411">
    <property type="entry name" value="KINESIN_MOTOR_1"/>
    <property type="match status" value="1"/>
</dbReference>
<dbReference type="PROSITE" id="PS50067">
    <property type="entry name" value="KINESIN_MOTOR_2"/>
    <property type="match status" value="1"/>
</dbReference>
<organism>
    <name type="scientific">Homo sapiens</name>
    <name type="common">Human</name>
    <dbReference type="NCBI Taxonomy" id="9606"/>
    <lineage>
        <taxon>Eukaryota</taxon>
        <taxon>Metazoa</taxon>
        <taxon>Chordata</taxon>
        <taxon>Craniata</taxon>
        <taxon>Vertebrata</taxon>
        <taxon>Euteleostomi</taxon>
        <taxon>Mammalia</taxon>
        <taxon>Eutheria</taxon>
        <taxon>Euarchontoglires</taxon>
        <taxon>Primates</taxon>
        <taxon>Haplorrhini</taxon>
        <taxon>Catarrhini</taxon>
        <taxon>Hominidae</taxon>
        <taxon>Homo</taxon>
    </lineage>
</organism>
<comment type="function">
    <text evidence="1 6 7 8 11 13 14">Microtubule motor protein that binds to microtubules with high affinity through each tubulin heterodimer and has an ATPase activity (By similarity). Plays a role in many processes like cell division, cytokinesis and also in cell proliferation and apoptosis (PubMed:16648480, PubMed:24784001). During cytokinesis, targets to central spindle and midbody through its interaction with PRC1 and CIT respectively (PubMed:16431929). Regulates cell growth through regulation of cell cycle progression and cytokinesis (PubMed:24854087). During cell cycle progression acts through SCF-dependent proteasomal ubiquitin-dependent protein catabolic process which controls CDKN1B degradation, resulting in positive regulation of cyclins, including CCNE1, CCND1 and CCNB1 (PubMed:24854087). During late neurogenesis, regulates the cerebellar, cerebral cortex and olfactory bulb development through regulation of apoptosis, cell proliferation and cell division (By similarity). Also is required for chromosome congression and alignment during mitotic cell cycle process (PubMed:15843429). Regulates cell spreading, focal adhesion dynamics, and cell migration through its interaction with RADIL resulting in regulation of RAP1A-mediated inside-out integrin activation by tethering RADIL on microtubules (PubMed:23209302).</text>
</comment>
<comment type="subunit">
    <text evidence="7 9 10 11 13">Directly interacts with PRC1 within a complex also containing KIF4A, KIF20A and KIF23; targets to the central spindle. Directly interacts with CIT depending on the activation state of the kinase (stronger interaction with the kinase-dead form); targets to the midbody. Interacts with ARRB2; the interaction is detected in the nucleus upon OR1D2 stimulation. Interacts with AKT1; the interaction is detected in the plasma membrane upon INS stimulation and promotes AKT1 phosphorylation. Interacts with SVIL; at midbody during cytokinesis. Interacts with RADIL (via PDZ domain); recruits RADIL to the microtubule network restricting RADIL from interaction with activated RAP1A (PubMed:23209302).</text>
</comment>
<comment type="interaction">
    <interactant intactId="EBI-1045252">
        <id>Q15058</id>
    </interactant>
    <interactant intactId="EBI-6995105">
        <id>O46385</id>
        <label>SVIL</label>
    </interactant>
    <organismsDiffer>true</organismsDiffer>
    <experiments>3</experiments>
</comment>
<comment type="subcellular location">
    <subcellularLocation>
        <location evidence="7">Nucleus</location>
    </subcellularLocation>
    <subcellularLocation>
        <location evidence="8">Cytoplasm</location>
    </subcellularLocation>
    <subcellularLocation>
        <location evidence="7">Cytoplasm</location>
        <location evidence="7">Cytoskeleton</location>
        <location evidence="7">Spindle</location>
    </subcellularLocation>
    <subcellularLocation>
        <location evidence="7 10 15">Midbody</location>
    </subcellularLocation>
    <text evidence="7 8">Nuclear localization observed during interphase (PubMed:16431929). Nuclear localization triggered by entry into mitosis (PubMed:16648480). Cytoplasmic in interphase (PubMed:16648480). Cytoplasmic in metaphase cells (PubMed:16431929). From prophase to metaphase, accumulates at the developing spindle poles and their associated microtubules. During anaphase, accumulates at the spindle midzone. Localization to the central spindle and midbody during anaphase is dependent upon PRC1 and CIT presence. In cells ready to undergo abscission, concentrates at the contractile ring.</text>
</comment>
<comment type="induction">
    <text evidence="8">Up-regulated in cells progressing through G2/M phase.</text>
</comment>
<comment type="domain">
    <text evidence="1">The kinesin motor domain binds to microtubules with high affinity and has a robust ATPase activity but a very slow motility. The kinesin motor domain protects microtubules from cold depolymerization. Binds to each tubulin heterodimer resulting in a microtubule complexes. Binds at the tubulin intradimer interface, at the crest of the protofilament, and orients slightly toward the next protofilament.</text>
</comment>
<comment type="disease" evidence="12">
    <disease id="DI-04349">
        <name>Meckel syndrome 12</name>
        <acronym>MKS12</acronym>
        <description>A form of Meckel syndrome, a disorder characterized by a combination of renal cysts and variably associated features including developmental anomalies of the central nervous system (typically encephalocele), hepatic ductal dysplasia and cysts, and polydactyly.</description>
        <dbReference type="MIM" id="616258"/>
    </disease>
    <text>The disease is caused by variants affecting the gene represented in this entry.</text>
</comment>
<comment type="disease" evidence="15 16">
    <disease id="DI-05207">
        <name>Microcephaly 20, primary, autosomal recessive</name>
        <acronym>MCPH20</acronym>
        <description>A form of microcephaly, a disease defined as a head circumference more than 3 standard deviations below the age, sex and ethnically matched mean. Brain weight is markedly reduced and the cerebral cortex is disproportionately small. MCPH20 features include mild to moderate intellectual disability, autistic features, poor speech. Disease severity is highly variable.</description>
        <dbReference type="MIM" id="617914"/>
    </disease>
    <text evidence="15">The disease is caused by variants affecting the gene represented in this entry. The disease-causing variant NM_014875.2:c.263T&gt;A, which produces a premature truncation of the protein at Leu-88 (p.Leu88Ter), may also partly result in the deletion of 372 bp of exon 2 of KIF14 by activation of a cryptic splice site. This in-frame deletion predicts a protein that lacks 124 aa (p.Gly58-Leu181del). The disease-causing mutation NM_014875.2:c.3662G&gt;T, resulting in the missence variant p.Gly1221Val, may also induce the skipping of exon 24, resulting in a protein that misses 76 aa (p.Gly1221_ Lys1296delinsVal).</text>
</comment>
<comment type="miscellaneous">
    <text evidence="13">It is resistant to docetaxel anhydrous.</text>
</comment>
<comment type="similarity">
    <text evidence="3">Belongs to the TRAFAC class myosin-kinesin ATPase superfamily. Kinesin family.</text>
</comment>
<comment type="sequence caution" evidence="17">
    <conflict type="erroneous initiation">
        <sequence resource="EMBL-CDS" id="BAA05392"/>
    </conflict>
    <text>Extended N-terminus.</text>
</comment>
<comment type="online information" name="Atlas of Genetics and Cytogenetics in Oncology and Haematology">
    <link uri="https://atlasgeneticsoncology.org/gene/44138/KIF14"/>
</comment>
<evidence type="ECO:0000250" key="1">
    <source>
        <dbReference type="UniProtKB" id="L0N7N1"/>
    </source>
</evidence>
<evidence type="ECO:0000255" key="2"/>
<evidence type="ECO:0000255" key="3">
    <source>
        <dbReference type="PROSITE-ProRule" id="PRU00283"/>
    </source>
</evidence>
<evidence type="ECO:0000256" key="4">
    <source>
        <dbReference type="SAM" id="MobiDB-lite"/>
    </source>
</evidence>
<evidence type="ECO:0000269" key="5">
    <source>
    </source>
</evidence>
<evidence type="ECO:0000269" key="6">
    <source>
    </source>
</evidence>
<evidence type="ECO:0000269" key="7">
    <source>
    </source>
</evidence>
<evidence type="ECO:0000269" key="8">
    <source>
    </source>
</evidence>
<evidence type="ECO:0000269" key="9">
    <source>
    </source>
</evidence>
<evidence type="ECO:0000269" key="10">
    <source>
    </source>
</evidence>
<evidence type="ECO:0000269" key="11">
    <source>
    </source>
</evidence>
<evidence type="ECO:0000269" key="12">
    <source>
    </source>
</evidence>
<evidence type="ECO:0000269" key="13">
    <source>
    </source>
</evidence>
<evidence type="ECO:0000269" key="14">
    <source>
    </source>
</evidence>
<evidence type="ECO:0000269" key="15">
    <source>
    </source>
</evidence>
<evidence type="ECO:0000269" key="16">
    <source>
    </source>
</evidence>
<evidence type="ECO:0000305" key="17"/>
<evidence type="ECO:0000312" key="18">
    <source>
        <dbReference type="HGNC" id="HGNC:19181"/>
    </source>
</evidence>
<evidence type="ECO:0007744" key="19">
    <source>
    </source>
</evidence>
<evidence type="ECO:0007744" key="20">
    <source>
    </source>
</evidence>
<evidence type="ECO:0007744" key="21">
    <source>
    </source>
</evidence>
<gene>
    <name evidence="18" type="primary">KIF14</name>
    <name evidence="18" type="synonym">KIAA0042</name>
</gene>
<protein>
    <recommendedName>
        <fullName evidence="17">Kinesin-like protein KIF14</fullName>
    </recommendedName>
</protein>
<reference key="1">
    <citation type="journal article" date="1994" name="DNA Res.">
        <title>Prediction of the coding sequences of unidentified human genes. II. The coding sequences of 40 new genes (KIAA0041-KIAA0080) deduced by analysis of cDNA clones from human cell line KG-1.</title>
        <authorList>
            <person name="Nomura N."/>
            <person name="Nagase T."/>
            <person name="Miyajima N."/>
            <person name="Sazuka T."/>
            <person name="Tanaka A."/>
            <person name="Sato S."/>
            <person name="Seki N."/>
            <person name="Kawarabayasi Y."/>
            <person name="Ishikawa K."/>
            <person name="Tabata S."/>
        </authorList>
    </citation>
    <scope>NUCLEOTIDE SEQUENCE [LARGE SCALE MRNA]</scope>
    <source>
        <tissue>Bone marrow</tissue>
    </source>
</reference>
<reference key="2">
    <citation type="journal article" date="2006" name="Nature">
        <title>The DNA sequence and biological annotation of human chromosome 1.</title>
        <authorList>
            <person name="Gregory S.G."/>
            <person name="Barlow K.F."/>
            <person name="McLay K.E."/>
            <person name="Kaul R."/>
            <person name="Swarbreck D."/>
            <person name="Dunham A."/>
            <person name="Scott C.E."/>
            <person name="Howe K.L."/>
            <person name="Woodfine K."/>
            <person name="Spencer C.C.A."/>
            <person name="Jones M.C."/>
            <person name="Gillson C."/>
            <person name="Searle S."/>
            <person name="Zhou Y."/>
            <person name="Kokocinski F."/>
            <person name="McDonald L."/>
            <person name="Evans R."/>
            <person name="Phillips K."/>
            <person name="Atkinson A."/>
            <person name="Cooper R."/>
            <person name="Jones C."/>
            <person name="Hall R.E."/>
            <person name="Andrews T.D."/>
            <person name="Lloyd C."/>
            <person name="Ainscough R."/>
            <person name="Almeida J.P."/>
            <person name="Ambrose K.D."/>
            <person name="Anderson F."/>
            <person name="Andrew R.W."/>
            <person name="Ashwell R.I.S."/>
            <person name="Aubin K."/>
            <person name="Babbage A.K."/>
            <person name="Bagguley C.L."/>
            <person name="Bailey J."/>
            <person name="Beasley H."/>
            <person name="Bethel G."/>
            <person name="Bird C.P."/>
            <person name="Bray-Allen S."/>
            <person name="Brown J.Y."/>
            <person name="Brown A.J."/>
            <person name="Buckley D."/>
            <person name="Burton J."/>
            <person name="Bye J."/>
            <person name="Carder C."/>
            <person name="Chapman J.C."/>
            <person name="Clark S.Y."/>
            <person name="Clarke G."/>
            <person name="Clee C."/>
            <person name="Cobley V."/>
            <person name="Collier R.E."/>
            <person name="Corby N."/>
            <person name="Coville G.J."/>
            <person name="Davies J."/>
            <person name="Deadman R."/>
            <person name="Dunn M."/>
            <person name="Earthrowl M."/>
            <person name="Ellington A.G."/>
            <person name="Errington H."/>
            <person name="Frankish A."/>
            <person name="Frankland J."/>
            <person name="French L."/>
            <person name="Garner P."/>
            <person name="Garnett J."/>
            <person name="Gay L."/>
            <person name="Ghori M.R.J."/>
            <person name="Gibson R."/>
            <person name="Gilby L.M."/>
            <person name="Gillett W."/>
            <person name="Glithero R.J."/>
            <person name="Grafham D.V."/>
            <person name="Griffiths C."/>
            <person name="Griffiths-Jones S."/>
            <person name="Grocock R."/>
            <person name="Hammond S."/>
            <person name="Harrison E.S.I."/>
            <person name="Hart E."/>
            <person name="Haugen E."/>
            <person name="Heath P.D."/>
            <person name="Holmes S."/>
            <person name="Holt K."/>
            <person name="Howden P.J."/>
            <person name="Hunt A.R."/>
            <person name="Hunt S.E."/>
            <person name="Hunter G."/>
            <person name="Isherwood J."/>
            <person name="James R."/>
            <person name="Johnson C."/>
            <person name="Johnson D."/>
            <person name="Joy A."/>
            <person name="Kay M."/>
            <person name="Kershaw J.K."/>
            <person name="Kibukawa M."/>
            <person name="Kimberley A.M."/>
            <person name="King A."/>
            <person name="Knights A.J."/>
            <person name="Lad H."/>
            <person name="Laird G."/>
            <person name="Lawlor S."/>
            <person name="Leongamornlert D.A."/>
            <person name="Lloyd D.M."/>
            <person name="Loveland J."/>
            <person name="Lovell J."/>
            <person name="Lush M.J."/>
            <person name="Lyne R."/>
            <person name="Martin S."/>
            <person name="Mashreghi-Mohammadi M."/>
            <person name="Matthews L."/>
            <person name="Matthews N.S.W."/>
            <person name="McLaren S."/>
            <person name="Milne S."/>
            <person name="Mistry S."/>
            <person name="Moore M.J.F."/>
            <person name="Nickerson T."/>
            <person name="O'Dell C.N."/>
            <person name="Oliver K."/>
            <person name="Palmeiri A."/>
            <person name="Palmer S.A."/>
            <person name="Parker A."/>
            <person name="Patel D."/>
            <person name="Pearce A.V."/>
            <person name="Peck A.I."/>
            <person name="Pelan S."/>
            <person name="Phelps K."/>
            <person name="Phillimore B.J."/>
            <person name="Plumb R."/>
            <person name="Rajan J."/>
            <person name="Raymond C."/>
            <person name="Rouse G."/>
            <person name="Saenphimmachak C."/>
            <person name="Sehra H.K."/>
            <person name="Sheridan E."/>
            <person name="Shownkeen R."/>
            <person name="Sims S."/>
            <person name="Skuce C.D."/>
            <person name="Smith M."/>
            <person name="Steward C."/>
            <person name="Subramanian S."/>
            <person name="Sycamore N."/>
            <person name="Tracey A."/>
            <person name="Tromans A."/>
            <person name="Van Helmond Z."/>
            <person name="Wall M."/>
            <person name="Wallis J.M."/>
            <person name="White S."/>
            <person name="Whitehead S.L."/>
            <person name="Wilkinson J.E."/>
            <person name="Willey D.L."/>
            <person name="Williams H."/>
            <person name="Wilming L."/>
            <person name="Wray P.W."/>
            <person name="Wu Z."/>
            <person name="Coulson A."/>
            <person name="Vaudin M."/>
            <person name="Sulston J.E."/>
            <person name="Durbin R.M."/>
            <person name="Hubbard T."/>
            <person name="Wooster R."/>
            <person name="Dunham I."/>
            <person name="Carter N.P."/>
            <person name="McVean G."/>
            <person name="Ross M.T."/>
            <person name="Harrow J."/>
            <person name="Olson M.V."/>
            <person name="Beck S."/>
            <person name="Rogers J."/>
            <person name="Bentley D.R."/>
        </authorList>
    </citation>
    <scope>NUCLEOTIDE SEQUENCE [LARGE SCALE GENOMIC DNA]</scope>
</reference>
<reference key="3">
    <citation type="submission" date="2005-07" db="EMBL/GenBank/DDBJ databases">
        <authorList>
            <person name="Mural R.J."/>
            <person name="Istrail S."/>
            <person name="Sutton G.G."/>
            <person name="Florea L."/>
            <person name="Halpern A.L."/>
            <person name="Mobarry C.M."/>
            <person name="Lippert R."/>
            <person name="Walenz B."/>
            <person name="Shatkay H."/>
            <person name="Dew I."/>
            <person name="Miller J.R."/>
            <person name="Flanigan M.J."/>
            <person name="Edwards N.J."/>
            <person name="Bolanos R."/>
            <person name="Fasulo D."/>
            <person name="Halldorsson B.V."/>
            <person name="Hannenhalli S."/>
            <person name="Turner R."/>
            <person name="Yooseph S."/>
            <person name="Lu F."/>
            <person name="Nusskern D.R."/>
            <person name="Shue B.C."/>
            <person name="Zheng X.H."/>
            <person name="Zhong F."/>
            <person name="Delcher A.L."/>
            <person name="Huson D.H."/>
            <person name="Kravitz S.A."/>
            <person name="Mouchard L."/>
            <person name="Reinert K."/>
            <person name="Remington K.A."/>
            <person name="Clark A.G."/>
            <person name="Waterman M.S."/>
            <person name="Eichler E.E."/>
            <person name="Adams M.D."/>
            <person name="Hunkapiller M.W."/>
            <person name="Myers E.W."/>
            <person name="Venter J.C."/>
        </authorList>
    </citation>
    <scope>NUCLEOTIDE SEQUENCE [LARGE SCALE GENOMIC DNA]</scope>
</reference>
<reference key="4">
    <citation type="journal article" date="2004" name="Genome Res.">
        <title>The status, quality, and expansion of the NIH full-length cDNA project: the Mammalian Gene Collection (MGC).</title>
        <authorList>
            <consortium name="The MGC Project Team"/>
        </authorList>
    </citation>
    <scope>NUCLEOTIDE SEQUENCE [LARGE SCALE MRNA]</scope>
    <scope>VARIANT ALA-1633</scope>
    <source>
        <tissue>Uterus</tissue>
    </source>
</reference>
<reference key="5">
    <citation type="journal article" date="2005" name="Mol. Biol. Cell">
        <title>Functional analysis of human microtubule-based motor proteins, the kinesins and dyneins, in mitosis/cytokinesis using RNA interference.</title>
        <authorList>
            <person name="Zhu C."/>
            <person name="Zhao J."/>
            <person name="Bibikova M."/>
            <person name="Leverson J.D."/>
            <person name="Bossy-Wetzel E."/>
            <person name="Fan J.-B."/>
            <person name="Abraham R.T."/>
            <person name="Jiang W."/>
        </authorList>
    </citation>
    <scope>FUNCTION</scope>
</reference>
<reference key="6">
    <citation type="journal article" date="2006" name="Cell">
        <title>Global, in vivo, and site-specific phosphorylation dynamics in signaling networks.</title>
        <authorList>
            <person name="Olsen J.V."/>
            <person name="Blagoev B."/>
            <person name="Gnad F."/>
            <person name="Macek B."/>
            <person name="Kumar C."/>
            <person name="Mortensen P."/>
            <person name="Mann M."/>
        </authorList>
    </citation>
    <scope>PHOSPHORYLATION [LARGE SCALE ANALYSIS] AT SER-1292</scope>
    <scope>IDENTIFICATION BY MASS SPECTROMETRY [LARGE SCALE ANALYSIS]</scope>
    <source>
        <tissue>Cervix carcinoma</tissue>
    </source>
</reference>
<reference key="7">
    <citation type="journal article" date="2006" name="J. Cell Biol.">
        <title>KIF14 and citron kinase act together to promote efficient cytokinesis.</title>
        <authorList>
            <person name="Gruneberg U."/>
            <person name="Neef R."/>
            <person name="Li X."/>
            <person name="Chan E.H.Y."/>
            <person name="Chalamalasetty R.B."/>
            <person name="Nigg E.A."/>
            <person name="Barr F.A."/>
        </authorList>
    </citation>
    <scope>FUNCTION</scope>
    <scope>SUBCELLULAR LOCATION</scope>
    <scope>INTERACTION WITH PRC1 AND CIT</scope>
</reference>
<reference key="8">
    <citation type="journal article" date="2006" name="J. Cell Sci.">
        <title>Novel function of beta-arrestin2 in the nucleus of mature spermatozoa.</title>
        <authorList>
            <person name="Neuhaus E.M."/>
            <person name="Mashukova A."/>
            <person name="Barbour J."/>
            <person name="Wolters D."/>
            <person name="Hatt H."/>
        </authorList>
    </citation>
    <scope>INTERACTION WITH ARRB2</scope>
</reference>
<reference key="9">
    <citation type="journal article" date="2006" name="Mol. Cell. Biol.">
        <title>RNA interference-mediated silencing of mitotic kinesin KIF14 disrupts cell cycle progression and induces cytokinesis failure.</title>
        <authorList>
            <person name="Carleton M."/>
            <person name="Mao M."/>
            <person name="Biery M."/>
            <person name="Warrener P."/>
            <person name="Kim S."/>
            <person name="Buser C."/>
            <person name="Marshall C.G."/>
            <person name="Fernandes C."/>
            <person name="Annis J."/>
            <person name="Linsley P.S."/>
        </authorList>
    </citation>
    <scope>FUNCTION</scope>
    <scope>SUBCELLULAR LOCATION</scope>
    <scope>INDUCTION</scope>
</reference>
<reference key="10">
    <citation type="journal article" date="2008" name="Proc. Natl. Acad. Sci. U.S.A.">
        <title>A quantitative atlas of mitotic phosphorylation.</title>
        <authorList>
            <person name="Dephoure N."/>
            <person name="Zhou C."/>
            <person name="Villen J."/>
            <person name="Beausoleil S.A."/>
            <person name="Bakalarski C.E."/>
            <person name="Elledge S.J."/>
            <person name="Gygi S.P."/>
        </authorList>
    </citation>
    <scope>IDENTIFICATION BY MASS SPECTROMETRY [LARGE SCALE ANALYSIS]</scope>
    <source>
        <tissue>Cervix carcinoma</tissue>
    </source>
</reference>
<reference key="11">
    <citation type="journal article" date="2010" name="Cytoskeleton">
        <title>Novel interactors and a role for supervillin in early cytokinesis.</title>
        <authorList>
            <person name="Smith T.C."/>
            <person name="Fang Z."/>
            <person name="Luna E.J."/>
        </authorList>
    </citation>
    <scope>INTERACTION WITH SVIL</scope>
    <scope>SUBCELLULAR LOCATION</scope>
</reference>
<reference key="12">
    <citation type="journal article" date="2010" name="Sci. Signal.">
        <title>Quantitative phosphoproteomics reveals widespread full phosphorylation site occupancy during mitosis.</title>
        <authorList>
            <person name="Olsen J.V."/>
            <person name="Vermeulen M."/>
            <person name="Santamaria A."/>
            <person name="Kumar C."/>
            <person name="Miller M.L."/>
            <person name="Jensen L.J."/>
            <person name="Gnad F."/>
            <person name="Cox J."/>
            <person name="Jensen T.S."/>
            <person name="Nigg E.A."/>
            <person name="Brunak S."/>
            <person name="Mann M."/>
        </authorList>
    </citation>
    <scope>PHOSPHORYLATION [LARGE SCALE ANALYSIS] AT SER-12</scope>
    <scope>IDENTIFICATION BY MASS SPECTROMETRY [LARGE SCALE ANALYSIS]</scope>
    <source>
        <tissue>Cervix carcinoma</tissue>
    </source>
</reference>
<reference key="13">
    <citation type="journal article" date="2011" name="BMC Syst. Biol.">
        <title>Initial characterization of the human central proteome.</title>
        <authorList>
            <person name="Burkard T.R."/>
            <person name="Planyavsky M."/>
            <person name="Kaupe I."/>
            <person name="Breitwieser F.P."/>
            <person name="Buerckstuemmer T."/>
            <person name="Bennett K.L."/>
            <person name="Superti-Furga G."/>
            <person name="Colinge J."/>
        </authorList>
    </citation>
    <scope>IDENTIFICATION BY MASS SPECTROMETRY [LARGE SCALE ANALYSIS]</scope>
</reference>
<reference key="14">
    <citation type="journal article" date="2012" name="J. Cell Biol.">
        <title>KIF14 negatively regulates Rap1a-Radil signaling during breast cancer progression.</title>
        <authorList>
            <person name="Ahmed S.M."/>
            <person name="Theriault B.L."/>
            <person name="Uppalapati M."/>
            <person name="Chiu C.W."/>
            <person name="Gallie B.L."/>
            <person name="Sidhu S.S."/>
            <person name="Angers S."/>
        </authorList>
    </citation>
    <scope>FUNCTION</scope>
    <scope>IDENTIFICATION BY MASS SPECTROMETRY</scope>
    <scope>INTERACTION WITH RADIL</scope>
</reference>
<reference key="15">
    <citation type="journal article" date="2013" name="J. Proteome Res.">
        <title>Toward a comprehensive characterization of a human cancer cell phosphoproteome.</title>
        <authorList>
            <person name="Zhou H."/>
            <person name="Di Palma S."/>
            <person name="Preisinger C."/>
            <person name="Peng M."/>
            <person name="Polat A.N."/>
            <person name="Heck A.J."/>
            <person name="Mohammed S."/>
        </authorList>
    </citation>
    <scope>PHOSPHORYLATION [LARGE SCALE ANALYSIS] AT SER-12; SER-272; THR-277; SER-346; THR-915; SER-937 AND SER-1292</scope>
    <scope>IDENTIFICATION BY MASS SPECTROMETRY [LARGE SCALE ANALYSIS]</scope>
    <source>
        <tissue>Cervix carcinoma</tissue>
        <tissue>Erythroleukemia</tissue>
    </source>
</reference>
<reference key="16">
    <citation type="journal article" date="2014" name="Exp. Mol. Med.">
        <title>Silencing of KIF14 interferes with cell cycle progression and cytokinesis by blocking the p27(Kip1) ubiquitination pathway in hepatocellular carcinoma.</title>
        <authorList>
            <person name="Xu H."/>
            <person name="Choe C."/>
            <person name="Shin S.H."/>
            <person name="Park S.W."/>
            <person name="Kim H.S."/>
            <person name="Jung S.H."/>
            <person name="Yim S.H."/>
            <person name="Kim T.M."/>
            <person name="Chung Y.J."/>
        </authorList>
    </citation>
    <scope>FUNCTION</scope>
</reference>
<reference key="17">
    <citation type="journal article" date="2014" name="Neoplasia">
        <title>KIF14 promotes AKT phosphorylation and contributes to chemoresistance in triple-negative breast cancer.</title>
        <authorList>
            <person name="Singel S.M."/>
            <person name="Cornelius C."/>
            <person name="Zaganjor E."/>
            <person name="Batten K."/>
            <person name="Sarode V.R."/>
            <person name="Buckley D.L."/>
            <person name="Peng Y."/>
            <person name="John G.B."/>
            <person name="Li H.C."/>
            <person name="Sadeghi N."/>
            <person name="Wright W.E."/>
            <person name="Lum L."/>
            <person name="Corson T.W."/>
            <person name="Shay J.W."/>
        </authorList>
    </citation>
    <scope>FUNCTION</scope>
    <scope>INTERACTION WITH AKT1</scope>
</reference>
<reference key="18">
    <citation type="journal article" date="2014" name="Clin. Genet.">
        <title>Exome sequencing identifies mutations in KIF14 as a novel cause of an autosomal recessive lethal fetal ciliopathy phenotype.</title>
        <authorList>
            <person name="Filges I."/>
            <person name="Nosova E."/>
            <person name="Bruder E."/>
            <person name="Tercanli S."/>
            <person name="Townsend K."/>
            <person name="Gibson W.T."/>
            <person name="Roethlisberger B."/>
            <person name="Heinimann K."/>
            <person name="Hall J.G."/>
            <person name="Gregory-Evans C.Y."/>
            <person name="Wasserman W.W."/>
            <person name="Miny P."/>
            <person name="Friedman J.M."/>
        </authorList>
    </citation>
    <scope>INVOLVEMENT IN MKS12</scope>
</reference>
<reference key="19">
    <citation type="journal article" date="2017" name="Ann. Neurol.">
        <title>Mutations of KIF14 cause primary microcephaly by impairing cytokinesis.</title>
        <authorList>
            <person name="Moawia A."/>
            <person name="Shaheen R."/>
            <person name="Rasool S."/>
            <person name="Waseem S.S."/>
            <person name="Ewida N."/>
            <person name="Budde B."/>
            <person name="Kawalia A."/>
            <person name="Motameny S."/>
            <person name="Khan K."/>
            <person name="Fatima A."/>
            <person name="Jameel M."/>
            <person name="Ullah F."/>
            <person name="Akram T."/>
            <person name="Ali Z."/>
            <person name="Abdullah U."/>
            <person name="Irshad S."/>
            <person name="Hoehne W."/>
            <person name="Noegel A.A."/>
            <person name="Al-Owain M."/>
            <person name="Hoertnagel K."/>
            <person name="Stoebe P."/>
            <person name="Baig S.M."/>
            <person name="Nuernberg P."/>
            <person name="Alkuraya F.S."/>
            <person name="Hahn A."/>
            <person name="Hussain M.S."/>
        </authorList>
    </citation>
    <scope>INVOLVEMENT IN MCPH20</scope>
    <scope>VARIANTS MCPH20 88-LEU--VAL-1648 DEL; VAL-827 DEL; ASP-849 AND VAL-1221</scope>
    <scope>SUBCELLULAR LOCATION</scope>
</reference>
<reference key="20">
    <citation type="journal article" date="2018" name="Eur. J. Hum. Genet.">
        <title>Biallelic variants in KIF14 cause intellectual disability with microcephaly.</title>
        <authorList>
            <person name="Makrythanasis P."/>
            <person name="Maroofian R."/>
            <person name="Stray-Pedersen A."/>
            <person name="Musaev D."/>
            <person name="Zaki M.S."/>
            <person name="Mahmoud I.G."/>
            <person name="Selim L."/>
            <person name="Elbadawy A."/>
            <person name="Jhangiani S.N."/>
            <person name="Coban Akdemir Z.H."/>
            <person name="Gambin T."/>
            <person name="Sorte H.S."/>
            <person name="Heiberg A."/>
            <person name="McEvoy-Venneri J."/>
            <person name="James K.N."/>
            <person name="Stanley V."/>
            <person name="Belandres D."/>
            <person name="Guipponi M."/>
            <person name="Santoni F.A."/>
            <person name="Ahangari N."/>
            <person name="Tara F."/>
            <person name="Doosti M."/>
            <person name="Iwaszkiewicz J."/>
            <person name="Zoete V."/>
            <person name="Backe P.H."/>
            <person name="Hamamy H."/>
            <person name="Gleeson J.G."/>
            <person name="Lupski J.R."/>
            <person name="Karimiani E.G."/>
            <person name="Antonarakis S.E."/>
        </authorList>
    </citation>
    <scope>INVOLVEMENT IN MCPH20</scope>
    <scope>VARIANTS MCPH20 ARG-459 AND PHE-841</scope>
</reference>
<sequence length="1648" mass="186492">MSLHSTHNRNNSGDILDIPSSQNSSSLNALTHSSRLKLHLKSDMSECENDDPLLRSAGKVRDINRTYVISASRKTADMPLTPNPVGRLALQRRTTRNKESSLLVSELEDTTEKTAETRLTLQRRAKTDSAEKWKTAEIDSVKMTLNVGGETENNGVSKESRTNVRIVNNAKNSFVASSVPLDEDPQVIEMMADKKYKETFSAPSRANENVALKYSSNRPPIASLSQTEVVRSGHLTTKPTQSKLDIKVLGTGNLYHRSIGKEIAKTSNKFGSLEKRTPTKCTTEHKLTTKCSLPQLKSPAPSILKNRMSNLQVKQRPKSSFLANKQERSAENTILPEEETVVQNTSAGKDPLKVENSQVTVAVRVRPFTKREKIEKASQVVFMSGKEITVEHPDTKQVYNFIYDVSFWSFDECHPHYASQTTVYEKLAAPLLERAFEGFNTCLFAYGQTGSGKSYTMMGFSEEPGIIPRFCEDLFSQVARKQTQEVSYHIEMSFFEVYNEKIHDLLVCKDENGQRKQPLRVREHPVYGPYVEALSMNIVSSYADIQSWLELGNKQRATAATGMNDKSSRSHSVFTLVMTQTKTEFVEGEEHDHRITSRINLIDLAGSERCSTAHTNGDRLKEGVSINKSLLTLGKVISALSEQANQRSVFIPYRESVLTWLLKESLGGNSKTAMIATISPAASNIEETLSTLRYANQARLIVNIAKVNEDMNAKLIRELKAEIAKLKAAQRNSRNIDPERYRLCRQEITSLRMKLHQQERDMAEMQRVWKEKFEQAEKRKLQETKELQKAGIMFQMDNHLPNLVNLNEDPQLSEMLLYMIKEGTTTVGKYKPNSSHDIQLSGVLIADDHCTIKNFGGTVSIIPVGEAKTYVNGKHILEITVLRHGDRVILGGDHYFRFNHPVEVQKGKRPSGRDTPISEGPKDFEFAKNELLMAQRSQLEAEIKEAQLKAKEEMMQGIQIAKEMAQQELSSQKAAYESKIKALEAELREESQRKKMQEINNQKANHKIEELEKAKQHLEQEIYVNKKRLEMETLATKQALEDHSIRHARILEALETEKQKIAKEVQILQQNRNNRDKTFTVQTTWSSMKLSMMIQEANAISSKLKTYYVFGRHDISDKSSSDTSIRVRNLKLGISTFWSLEKFESKLAAMKELYESNGSNRGEDAFCDPEDEWEPDITDAPVSSLSRRRSRSLMKNRRISGCLHDIQVHPIKNLHSSHSSGLMDKSSTIYSNSAESFLPGICKELIGSSLDFFGQSYDEERTIADSLINSFLKIYNGLFAISKAHEEQDEESQDNLFSSDRAIQSLTIQTACAFEQLVVLMKHWLSDLLPCTNIARLEDELRQEVKKLGGYLQLFLQGCCLDISSMIKEAQKNAIQIVQQAVKYVGQLAVLKGSKLHFLENGNNKAASVQEEFMDAVCDGVGLGMKILLDSGLEKAKELQHELFRQCTKNEVTKEMKTNAMGLIRSLENIFAESKIKSFRRQVQEENFEYQDFKRMVNRAPEFLKLKHCLEKAIEIIISALKGCHSDINLLQTCVESIRNLASDFYSDFSVPSTSVGSYESRVTHIVHQELESLAKSLLFCFESEESPDLLKPWETYNQNTKEEHQQSKSSGIDGSKNKGVPKRVYELHGSSPAVSSEECTPSRIQWV</sequence>
<proteinExistence type="evidence at protein level"/>
<name>KIF14_HUMAN</name>
<keyword id="KW-0067">ATP-binding</keyword>
<keyword id="KW-1186">Ciliopathy</keyword>
<keyword id="KW-0175">Coiled coil</keyword>
<keyword id="KW-0963">Cytoplasm</keyword>
<keyword id="KW-0206">Cytoskeleton</keyword>
<keyword id="KW-0225">Disease variant</keyword>
<keyword id="KW-0981">Meckel syndrome</keyword>
<keyword id="KW-0493">Microtubule</keyword>
<keyword id="KW-0505">Motor protein</keyword>
<keyword id="KW-0547">Nucleotide-binding</keyword>
<keyword id="KW-0539">Nucleus</keyword>
<keyword id="KW-0597">Phosphoprotein</keyword>
<keyword id="KW-0905">Primary microcephaly</keyword>
<keyword id="KW-1267">Proteomics identification</keyword>
<keyword id="KW-1185">Reference proteome</keyword>
<accession>Q15058</accession>
<accession>Q14CI8</accession>
<accession>Q4G0A5</accession>
<accession>Q5T1W3</accession>
<feature type="chain" id="PRO_0000125449" description="Kinesin-like protein KIF14">
    <location>
        <begin position="1"/>
        <end position="1648"/>
    </location>
</feature>
<feature type="domain" description="Kinesin motor" evidence="3">
    <location>
        <begin position="358"/>
        <end position="701"/>
    </location>
</feature>
<feature type="domain" description="FHA">
    <location>
        <begin position="825"/>
        <end position="891"/>
    </location>
</feature>
<feature type="region of interest" description="Required for PRC1-binding">
    <location>
        <begin position="1"/>
        <end position="356"/>
    </location>
</feature>
<feature type="region of interest" description="Disordered" evidence="4">
    <location>
        <begin position="1"/>
        <end position="27"/>
    </location>
</feature>
<feature type="region of interest" description="Required for microtubule-binding with high affinity" evidence="1">
    <location>
        <begin position="356"/>
        <end position="737"/>
    </location>
</feature>
<feature type="region of interest" description="Required for CIT-binding">
    <location>
        <begin position="901"/>
        <end position="1648"/>
    </location>
</feature>
<feature type="region of interest" description="Disordered" evidence="4">
    <location>
        <begin position="1600"/>
        <end position="1648"/>
    </location>
</feature>
<feature type="coiled-coil region" evidence="2">
    <location>
        <begin position="705"/>
        <end position="791"/>
    </location>
</feature>
<feature type="coiled-coil region" evidence="2">
    <location>
        <begin position="922"/>
        <end position="1079"/>
    </location>
</feature>
<feature type="coiled-coil region" evidence="2">
    <location>
        <begin position="1332"/>
        <end position="1348"/>
    </location>
</feature>
<feature type="coiled-coil region" evidence="2">
    <location>
        <begin position="1468"/>
        <end position="1500"/>
    </location>
</feature>
<feature type="compositionally biased region" description="Polar residues" evidence="4">
    <location>
        <begin position="1633"/>
        <end position="1648"/>
    </location>
</feature>
<feature type="binding site" evidence="3">
    <location>
        <begin position="447"/>
        <end position="454"/>
    </location>
    <ligand>
        <name>ATP</name>
        <dbReference type="ChEBI" id="CHEBI:30616"/>
    </ligand>
</feature>
<feature type="modified residue" description="Phosphoserine" evidence="20 21">
    <location>
        <position position="12"/>
    </location>
</feature>
<feature type="modified residue" description="Phosphoserine" evidence="21">
    <location>
        <position position="272"/>
    </location>
</feature>
<feature type="modified residue" description="Phosphothreonine" evidence="21">
    <location>
        <position position="277"/>
    </location>
</feature>
<feature type="modified residue" description="Phosphoserine" evidence="21">
    <location>
        <position position="346"/>
    </location>
</feature>
<feature type="modified residue" description="Phosphothreonine" evidence="21">
    <location>
        <position position="915"/>
    </location>
</feature>
<feature type="modified residue" description="Phosphoserine" evidence="21">
    <location>
        <position position="937"/>
    </location>
</feature>
<feature type="modified residue" description="Phosphoserine" evidence="19 21">
    <location>
        <position position="1292"/>
    </location>
</feature>
<feature type="sequence variant" id="VAR_080623" description="In MCPH20; drastically decreased expression at the mRNA level; loss of localization at the midbody during cytokinesis and consequently loss of CIT/CRIK recruitment to the midbody." evidence="15">
    <location>
        <begin position="88"/>
        <end position="1648"/>
    </location>
</feature>
<feature type="sequence variant" id="VAR_080624" description="In MCPH20; uncertain significance." evidence="16">
    <original>G</original>
    <variation>R</variation>
    <location>
        <position position="459"/>
    </location>
</feature>
<feature type="sequence variant" id="VAR_080625" description="In MCPH20; uncertain significance." evidence="15">
    <location>
        <position position="827"/>
    </location>
</feature>
<feature type="sequence variant" id="VAR_080626" description="In MCPH20; uncertain significance; dbSNP:rs139385693." evidence="16">
    <original>S</original>
    <variation>F</variation>
    <location>
        <position position="841"/>
    </location>
</feature>
<feature type="sequence variant" id="VAR_080627" description="In MCPH20; Decreased expression at the mRNA level and loss of localization at the midbody during cytokinesis and consequently loss of CIT/CRIK recruitment to the midbody, when analyzed in primary fibroblasts from a patient who is a compound heterozygous with variant V-1221; dbSNP:rs1553259528." evidence="15">
    <original>H</original>
    <variation>D</variation>
    <location>
        <position position="849"/>
    </location>
</feature>
<feature type="sequence variant" id="VAR_080628" description="In MCPH20; Decreased expression at the mRNA level and loss of localization at the midbody during cytokinesis and consequently loss of CIT/CRIK recruitment to the midbody, when analyzed in primary fibroblasts from a patient who is a compound heterozygous with variant D-849." evidence="15">
    <original>G</original>
    <variation>V</variation>
    <location>
        <position position="1221"/>
    </location>
</feature>
<feature type="sequence variant" id="VAR_037777" description="In dbSNP:rs12120084." evidence="5">
    <original>P</original>
    <variation>A</variation>
    <location>
        <position position="1633"/>
    </location>
</feature>
<feature type="sequence conflict" description="In Ref. 4; AAH98582." evidence="17" ref="4">
    <original>W</original>
    <variation>C</variation>
    <location>
        <position position="660"/>
    </location>
</feature>